<dbReference type="EMBL" id="CP000527">
    <property type="protein sequence ID" value="ABM28773.1"/>
    <property type="molecule type" value="Genomic_DNA"/>
</dbReference>
<dbReference type="RefSeq" id="WP_010938607.1">
    <property type="nucleotide sequence ID" value="NC_008751.1"/>
</dbReference>
<dbReference type="SMR" id="A1VEA7"/>
<dbReference type="KEGG" id="dvl:Dvul_1756"/>
<dbReference type="HOGENOM" id="CLU_073626_1_0_7"/>
<dbReference type="Proteomes" id="UP000009173">
    <property type="component" value="Chromosome"/>
</dbReference>
<dbReference type="GO" id="GO:0022627">
    <property type="term" value="C:cytosolic small ribosomal subunit"/>
    <property type="evidence" value="ECO:0007669"/>
    <property type="project" value="TreeGrafter"/>
</dbReference>
<dbReference type="GO" id="GO:0019843">
    <property type="term" value="F:rRNA binding"/>
    <property type="evidence" value="ECO:0007669"/>
    <property type="project" value="UniProtKB-UniRule"/>
</dbReference>
<dbReference type="GO" id="GO:0003735">
    <property type="term" value="F:structural constituent of ribosome"/>
    <property type="evidence" value="ECO:0007669"/>
    <property type="project" value="InterPro"/>
</dbReference>
<dbReference type="GO" id="GO:0006412">
    <property type="term" value="P:translation"/>
    <property type="evidence" value="ECO:0007669"/>
    <property type="project" value="UniProtKB-UniRule"/>
</dbReference>
<dbReference type="CDD" id="cd00364">
    <property type="entry name" value="Ribosomal_uS17"/>
    <property type="match status" value="1"/>
</dbReference>
<dbReference type="Gene3D" id="2.40.50.140">
    <property type="entry name" value="Nucleic acid-binding proteins"/>
    <property type="match status" value="1"/>
</dbReference>
<dbReference type="HAMAP" id="MF_01345_B">
    <property type="entry name" value="Ribosomal_uS17_B"/>
    <property type="match status" value="1"/>
</dbReference>
<dbReference type="InterPro" id="IPR012340">
    <property type="entry name" value="NA-bd_OB-fold"/>
</dbReference>
<dbReference type="InterPro" id="IPR000266">
    <property type="entry name" value="Ribosomal_uS17"/>
</dbReference>
<dbReference type="InterPro" id="IPR019984">
    <property type="entry name" value="Ribosomal_uS17_bact/chlr"/>
</dbReference>
<dbReference type="InterPro" id="IPR019979">
    <property type="entry name" value="Ribosomal_uS17_CS"/>
</dbReference>
<dbReference type="NCBIfam" id="NF004123">
    <property type="entry name" value="PRK05610.1"/>
    <property type="match status" value="1"/>
</dbReference>
<dbReference type="NCBIfam" id="TIGR03635">
    <property type="entry name" value="uS17_bact"/>
    <property type="match status" value="1"/>
</dbReference>
<dbReference type="PANTHER" id="PTHR10744">
    <property type="entry name" value="40S RIBOSOMAL PROTEIN S11 FAMILY MEMBER"/>
    <property type="match status" value="1"/>
</dbReference>
<dbReference type="PANTHER" id="PTHR10744:SF1">
    <property type="entry name" value="SMALL RIBOSOMAL SUBUNIT PROTEIN US17M"/>
    <property type="match status" value="1"/>
</dbReference>
<dbReference type="Pfam" id="PF00366">
    <property type="entry name" value="Ribosomal_S17"/>
    <property type="match status" value="1"/>
</dbReference>
<dbReference type="PRINTS" id="PR00973">
    <property type="entry name" value="RIBOSOMALS17"/>
</dbReference>
<dbReference type="SUPFAM" id="SSF50249">
    <property type="entry name" value="Nucleic acid-binding proteins"/>
    <property type="match status" value="1"/>
</dbReference>
<dbReference type="PROSITE" id="PS00056">
    <property type="entry name" value="RIBOSOMAL_S17"/>
    <property type="match status" value="1"/>
</dbReference>
<accession>A1VEA7</accession>
<reference key="1">
    <citation type="journal article" date="2009" name="Environ. Microbiol.">
        <title>Contribution of mobile genetic elements to Desulfovibrio vulgaris genome plasticity.</title>
        <authorList>
            <person name="Walker C.B."/>
            <person name="Stolyar S."/>
            <person name="Chivian D."/>
            <person name="Pinel N."/>
            <person name="Gabster J.A."/>
            <person name="Dehal P.S."/>
            <person name="He Z."/>
            <person name="Yang Z.K."/>
            <person name="Yen H.C."/>
            <person name="Zhou J."/>
            <person name="Wall J.D."/>
            <person name="Hazen T.C."/>
            <person name="Arkin A.P."/>
            <person name="Stahl D.A."/>
        </authorList>
    </citation>
    <scope>NUCLEOTIDE SEQUENCE [LARGE SCALE GENOMIC DNA]</scope>
    <source>
        <strain>DP4</strain>
    </source>
</reference>
<name>RS17_NITV4</name>
<organism>
    <name type="scientific">Nitratidesulfovibrio vulgaris (strain DP4)</name>
    <name type="common">Desulfovibrio vulgaris</name>
    <dbReference type="NCBI Taxonomy" id="391774"/>
    <lineage>
        <taxon>Bacteria</taxon>
        <taxon>Pseudomonadati</taxon>
        <taxon>Thermodesulfobacteriota</taxon>
        <taxon>Desulfovibrionia</taxon>
        <taxon>Desulfovibrionales</taxon>
        <taxon>Desulfovibrionaceae</taxon>
        <taxon>Nitratidesulfovibrio</taxon>
    </lineage>
</organism>
<feature type="chain" id="PRO_1000054947" description="Small ribosomal subunit protein uS17">
    <location>
        <begin position="1"/>
        <end position="88"/>
    </location>
</feature>
<evidence type="ECO:0000255" key="1">
    <source>
        <dbReference type="HAMAP-Rule" id="MF_01345"/>
    </source>
</evidence>
<evidence type="ECO:0000305" key="2"/>
<proteinExistence type="inferred from homology"/>
<protein>
    <recommendedName>
        <fullName evidence="1">Small ribosomal subunit protein uS17</fullName>
    </recommendedName>
    <alternativeName>
        <fullName evidence="2">30S ribosomal protein S17</fullName>
    </alternativeName>
</protein>
<gene>
    <name evidence="1" type="primary">rpsQ</name>
    <name type="ordered locus">Dvul_1756</name>
</gene>
<keyword id="KW-0687">Ribonucleoprotein</keyword>
<keyword id="KW-0689">Ribosomal protein</keyword>
<keyword id="KW-0694">RNA-binding</keyword>
<keyword id="KW-0699">rRNA-binding</keyword>
<sequence length="88" mass="10300">MSEATYQRKGRTLVGIVVSDKNDKTIVVRVETLVKHPLLKKYVRRRKKFTAHDPMNECGIGDKVKIIEFRPLSRNKRWHLESILEKAV</sequence>
<comment type="function">
    <text evidence="1">One of the primary rRNA binding proteins, it binds specifically to the 5'-end of 16S ribosomal RNA.</text>
</comment>
<comment type="subunit">
    <text evidence="1">Part of the 30S ribosomal subunit.</text>
</comment>
<comment type="similarity">
    <text evidence="1">Belongs to the universal ribosomal protein uS17 family.</text>
</comment>